<evidence type="ECO:0000250" key="1">
    <source>
        <dbReference type="UniProtKB" id="P86037"/>
    </source>
</evidence>
<evidence type="ECO:0000255" key="2"/>
<evidence type="ECO:0000269" key="3">
    <source>
    </source>
</evidence>
<evidence type="ECO:0000303" key="4">
    <source>
    </source>
</evidence>
<evidence type="ECO:0000305" key="5"/>
<comment type="function">
    <text evidence="1">Has antibacterial activity.</text>
</comment>
<comment type="subcellular location">
    <subcellularLocation>
        <location evidence="5">Secreted</location>
    </subcellularLocation>
</comment>
<comment type="tissue specificity">
    <text evidence="5">Expressed by the skin glands.</text>
</comment>
<comment type="similarity">
    <text evidence="2">Belongs to the frog skin active peptide (FSAP) family. Dermaseptin subfamily.</text>
</comment>
<proteinExistence type="evidence at protein level"/>
<name>RNSP6_BOARA</name>
<keyword id="KW-0878">Amphibian defense peptide</keyword>
<keyword id="KW-0044">Antibiotic</keyword>
<keyword id="KW-0929">Antimicrobial</keyword>
<keyword id="KW-0165">Cleavage on pair of basic residues</keyword>
<keyword id="KW-0903">Direct protein sequencing</keyword>
<keyword id="KW-0964">Secreted</keyword>
<keyword id="KW-0732">Signal</keyword>
<reference evidence="5" key="1">
    <citation type="journal article" date="2008" name="Biochem. Biophys. Res. Commun.">
        <title>Post-secretory events alter the peptide content of the skin secretion of Hypsiboas raniceps.</title>
        <authorList>
            <person name="Magalhaes B.S."/>
            <person name="Melo J.A.T."/>
            <person name="Leite J.R.S.A."/>
            <person name="Silva L.P."/>
            <person name="Prates M.V."/>
            <person name="Vinecky F."/>
            <person name="Barbosa E.A."/>
            <person name="Verly R.M."/>
            <person name="Mehta A."/>
            <person name="Nicoli J.R."/>
            <person name="Bemquerer M.P."/>
            <person name="Andrade A.C."/>
            <person name="Bloch C. Jr."/>
        </authorList>
    </citation>
    <scope>NUCLEOTIDE SEQUENCE [MRNA]</scope>
    <scope>PROTEIN SEQUENCE OF 52-80</scope>
    <source>
        <tissue evidence="3">Skin</tissue>
        <tissue evidence="3">Skin secretion</tissue>
    </source>
</reference>
<feature type="signal peptide" evidence="2">
    <location>
        <begin position="1"/>
        <end position="22"/>
    </location>
</feature>
<feature type="propeptide" id="PRO_0000371447" evidence="3">
    <location>
        <begin position="23"/>
        <end position="49"/>
    </location>
</feature>
<feature type="peptide" id="PRO_0000371448" description="Raniseptin-6" evidence="3">
    <location>
        <begin position="52"/>
        <end position="80"/>
    </location>
</feature>
<sequence>MAFLKKSLFLVLFLGIVSLSICEEEKREGEEEEKQEEENEELSEEELRERRALLDKLKSLGKVVGKVALGVVQNYLNPRQ</sequence>
<organism>
    <name type="scientific">Boana raniceps</name>
    <name type="common">Chaco tree frog</name>
    <name type="synonym">Hyla roeschmanni</name>
    <dbReference type="NCBI Taxonomy" id="192750"/>
    <lineage>
        <taxon>Eukaryota</taxon>
        <taxon>Metazoa</taxon>
        <taxon>Chordata</taxon>
        <taxon>Craniata</taxon>
        <taxon>Vertebrata</taxon>
        <taxon>Euteleostomi</taxon>
        <taxon>Amphibia</taxon>
        <taxon>Batrachia</taxon>
        <taxon>Anura</taxon>
        <taxon>Neobatrachia</taxon>
        <taxon>Hyloidea</taxon>
        <taxon>Hylidae</taxon>
        <taxon>Hylinae</taxon>
        <taxon>Cophomantini</taxon>
        <taxon>Boana</taxon>
    </lineage>
</organism>
<accession>P86039</accession>
<protein>
    <recommendedName>
        <fullName evidence="4">Raniseptin-6</fullName>
        <shortName evidence="4">Rsp-6</shortName>
    </recommendedName>
</protein>
<dbReference type="GO" id="GO:0005576">
    <property type="term" value="C:extracellular region"/>
    <property type="evidence" value="ECO:0007669"/>
    <property type="project" value="UniProtKB-SubCell"/>
</dbReference>
<dbReference type="GO" id="GO:0042742">
    <property type="term" value="P:defense response to bacterium"/>
    <property type="evidence" value="ECO:0007669"/>
    <property type="project" value="UniProtKB-KW"/>
</dbReference>
<dbReference type="InterPro" id="IPR004275">
    <property type="entry name" value="Frog_antimicrobial_propeptide"/>
</dbReference>
<dbReference type="InterPro" id="IPR016322">
    <property type="entry name" value="FSAP"/>
</dbReference>
<dbReference type="Pfam" id="PF03032">
    <property type="entry name" value="FSAP_sig_propep"/>
    <property type="match status" value="1"/>
</dbReference>
<dbReference type="PIRSF" id="PIRSF001822">
    <property type="entry name" value="Dermaseptin_precursor"/>
    <property type="match status" value="1"/>
</dbReference>